<keyword id="KW-0378">Hydrolase</keyword>
<keyword id="KW-1185">Reference proteome</keyword>
<sequence>MVHRPRLLCLHGGGASSQIMRVQFSKLESALRKTFQLVFLEGPLDSAPGPGVLPFFEDFGPYSCWVSDDKSLLPEEKRKEENNAIAYIKTFMLQYGPFAGILGFSQGARATASILLEQQREAFTHDALFGVFFCGTFPPFIPDAPDISLPTVHILGLTDPYLRESEELLEHCTQQSVRRVIKFNGGHHMPTSSDVTQKIADVITMTYRTSQRKKVSNIWRKKVPDCRSLALES</sequence>
<accession>S0EES1</accession>
<gene>
    <name evidence="5" type="primary">FUS5</name>
    <name type="ORF">FFUJ_10054</name>
</gene>
<protein>
    <recommendedName>
        <fullName evidence="2">Esterase FUS5</fullName>
        <ecNumber evidence="6">3.1.2.-</ecNumber>
    </recommendedName>
    <alternativeName>
        <fullName evidence="5">Fusarin biosynthesis protein 5</fullName>
    </alternativeName>
</protein>
<dbReference type="EC" id="3.1.2.-" evidence="6"/>
<dbReference type="EMBL" id="HF679031">
    <property type="protein sequence ID" value="CCT73264.1"/>
    <property type="molecule type" value="Genomic_DNA"/>
</dbReference>
<dbReference type="SMR" id="S0EES1"/>
<dbReference type="STRING" id="1279085.S0EES1"/>
<dbReference type="ESTHER" id="gibf5-fus5">
    <property type="family name" value="FSH1"/>
</dbReference>
<dbReference type="EnsemblFungi" id="CCT73264">
    <property type="protein sequence ID" value="CCT73264"/>
    <property type="gene ID" value="FFUJ_10054"/>
</dbReference>
<dbReference type="VEuPathDB" id="FungiDB:FFUJ_10054"/>
<dbReference type="HOGENOM" id="CLU_051938_0_2_1"/>
<dbReference type="Proteomes" id="UP000016800">
    <property type="component" value="Chromosome 9"/>
</dbReference>
<dbReference type="GO" id="GO:0005737">
    <property type="term" value="C:cytoplasm"/>
    <property type="evidence" value="ECO:0007669"/>
    <property type="project" value="TreeGrafter"/>
</dbReference>
<dbReference type="GO" id="GO:0005634">
    <property type="term" value="C:nucleus"/>
    <property type="evidence" value="ECO:0007669"/>
    <property type="project" value="TreeGrafter"/>
</dbReference>
<dbReference type="GO" id="GO:0016787">
    <property type="term" value="F:hydrolase activity"/>
    <property type="evidence" value="ECO:0007669"/>
    <property type="project" value="UniProtKB-KW"/>
</dbReference>
<dbReference type="GO" id="GO:0044550">
    <property type="term" value="P:secondary metabolite biosynthetic process"/>
    <property type="evidence" value="ECO:0007669"/>
    <property type="project" value="TreeGrafter"/>
</dbReference>
<dbReference type="Gene3D" id="3.40.50.1820">
    <property type="entry name" value="alpha/beta hydrolase"/>
    <property type="match status" value="1"/>
</dbReference>
<dbReference type="InterPro" id="IPR029058">
    <property type="entry name" value="AB_hydrolase_fold"/>
</dbReference>
<dbReference type="InterPro" id="IPR005645">
    <property type="entry name" value="FSH-like_dom"/>
</dbReference>
<dbReference type="InterPro" id="IPR050593">
    <property type="entry name" value="LovG"/>
</dbReference>
<dbReference type="PANTHER" id="PTHR48070:SF3">
    <property type="entry name" value="ESTERASE DBAE-RELATED"/>
    <property type="match status" value="1"/>
</dbReference>
<dbReference type="PANTHER" id="PTHR48070">
    <property type="entry name" value="ESTERASE OVCA2"/>
    <property type="match status" value="1"/>
</dbReference>
<dbReference type="Pfam" id="PF03959">
    <property type="entry name" value="FSH1"/>
    <property type="match status" value="1"/>
</dbReference>
<dbReference type="SUPFAM" id="SSF53474">
    <property type="entry name" value="alpha/beta-Hydrolases"/>
    <property type="match status" value="1"/>
</dbReference>
<organism>
    <name type="scientific">Gibberella fujikuroi (strain CBS 195.34 / IMI 58289 / NRRL A-6831)</name>
    <name type="common">Bakanae and foot rot disease fungus</name>
    <name type="synonym">Fusarium fujikuroi</name>
    <dbReference type="NCBI Taxonomy" id="1279085"/>
    <lineage>
        <taxon>Eukaryota</taxon>
        <taxon>Fungi</taxon>
        <taxon>Dikarya</taxon>
        <taxon>Ascomycota</taxon>
        <taxon>Pezizomycotina</taxon>
        <taxon>Sordariomycetes</taxon>
        <taxon>Hypocreomycetidae</taxon>
        <taxon>Hypocreales</taxon>
        <taxon>Nectriaceae</taxon>
        <taxon>Fusarium</taxon>
        <taxon>Fusarium fujikuroi species complex</taxon>
    </lineage>
</organism>
<proteinExistence type="evidence at transcript level"/>
<name>FUS5_GIBF5</name>
<feature type="chain" id="PRO_0000437369" description="Esterase FUS5">
    <location>
        <begin position="1"/>
        <end position="233"/>
    </location>
</feature>
<feature type="active site" description="Charge relay system" evidence="1">
    <location>
        <position position="105"/>
    </location>
</feature>
<feature type="active site" description="Charge relay system" evidence="1">
    <location>
        <position position="159"/>
    </location>
</feature>
<feature type="active site" description="Charge relay system" evidence="1">
    <location>
        <position position="187"/>
    </location>
</feature>
<evidence type="ECO:0000250" key="1">
    <source>
        <dbReference type="UniProtKB" id="P38777"/>
    </source>
</evidence>
<evidence type="ECO:0000250" key="2">
    <source>
        <dbReference type="UniProtKB" id="Q0C8M2"/>
    </source>
</evidence>
<evidence type="ECO:0000269" key="3">
    <source>
    </source>
</evidence>
<evidence type="ECO:0000269" key="4">
    <source>
    </source>
</evidence>
<evidence type="ECO:0000303" key="5">
    <source>
    </source>
</evidence>
<evidence type="ECO:0000305" key="6"/>
<comment type="function">
    <text evidence="4">Esterase; part of the gene cluster that mediates the biosynthesis of the mycotoxin fusarin C (PubMed:23932525). Within the cluster, FUS1, FUS2, FUS8 and FUS9 are sufficient for fusarin production (PubMed:23932525). The other FUS cluster members are not essential for fusarin C biosynthesis (PubMed:23932525).</text>
</comment>
<comment type="induction">
    <text evidence="3 4">Expressed under high amounts of nitrogen via regulation by GLN1 (PubMed:23932525). Moreover, components of the fungal-specific velvet complex VEL1, VEL2 and LAE1 act also as positive regulators of expression (PubMed:20572938, PubMed:23932525). Finally, expression is induced under acidic conditions in a PACC-independent manner (PubMed:23932525).</text>
</comment>
<comment type="disruption phenotype">
    <text evidence="4">Does not alter fusarin C production (PubMed:23932525).</text>
</comment>
<comment type="similarity">
    <text evidence="6">Belongs to the LovG family.</text>
</comment>
<reference key="1">
    <citation type="journal article" date="2013" name="PLoS Pathog.">
        <title>Deciphering the cryptic genome: genome-wide analyses of the rice pathogen Fusarium fujikuroi reveal complex regulation of secondary metabolism and novel metabolites.</title>
        <authorList>
            <person name="Wiemann P."/>
            <person name="Sieber C.M.K."/>
            <person name="von Bargen K.W."/>
            <person name="Studt L."/>
            <person name="Niehaus E.-M."/>
            <person name="Espino J.J."/>
            <person name="Huss K."/>
            <person name="Michielse C.B."/>
            <person name="Albermann S."/>
            <person name="Wagner D."/>
            <person name="Bergner S.V."/>
            <person name="Connolly L.R."/>
            <person name="Fischer A."/>
            <person name="Reuter G."/>
            <person name="Kleigrewe K."/>
            <person name="Bald T."/>
            <person name="Wingfield B.D."/>
            <person name="Ophir R."/>
            <person name="Freeman S."/>
            <person name="Hippler M."/>
            <person name="Smith K.M."/>
            <person name="Brown D.W."/>
            <person name="Proctor R.H."/>
            <person name="Muensterkoetter M."/>
            <person name="Freitag M."/>
            <person name="Humpf H.-U."/>
            <person name="Gueldener U."/>
            <person name="Tudzynski B."/>
        </authorList>
    </citation>
    <scope>NUCLEOTIDE SEQUENCE [LARGE SCALE GENOMIC DNA]</scope>
    <source>
        <strain>CBS 195.34 / IMI 58289 / NRRL A-6831</strain>
    </source>
</reference>
<reference key="2">
    <citation type="journal article" date="2010" name="Mol. Microbiol.">
        <title>FfVel1 and FfLae1, components of a velvet-like complex in Fusarium fujikuroi, affect differentiation, secondary metabolism and virulence.</title>
        <authorList>
            <person name="Wiemann P."/>
            <person name="Brown D.W."/>
            <person name="Kleigrewe K."/>
            <person name="Bok J.W."/>
            <person name="Keller N.P."/>
            <person name="Humpf H.U."/>
            <person name="Tudzynski B."/>
        </authorList>
    </citation>
    <scope>INDUCTION</scope>
</reference>
<reference key="3">
    <citation type="journal article" date="2013" name="Chem. Biol.">
        <title>Genetic manipulation of the Fusarium fujikuroi fusarin gene cluster yields insight into the complex regulation and fusarin biosynthetic pathway.</title>
        <authorList>
            <person name="Niehaus E.M."/>
            <person name="Kleigrewe K."/>
            <person name="Wiemann P."/>
            <person name="Studt L."/>
            <person name="Sieber C.M."/>
            <person name="Connolly L.R."/>
            <person name="Freitag M."/>
            <person name="Gueldener U."/>
            <person name="Tudzynski B."/>
            <person name="Humpf H.U."/>
        </authorList>
    </citation>
    <scope>FUNCTION</scope>
    <scope>INDUCTION</scope>
    <scope>DISRUPTION PHENOTYPE</scope>
</reference>